<organism>
    <name type="scientific">Shewanella baltica (strain OS195)</name>
    <dbReference type="NCBI Taxonomy" id="399599"/>
    <lineage>
        <taxon>Bacteria</taxon>
        <taxon>Pseudomonadati</taxon>
        <taxon>Pseudomonadota</taxon>
        <taxon>Gammaproteobacteria</taxon>
        <taxon>Alteromonadales</taxon>
        <taxon>Shewanellaceae</taxon>
        <taxon>Shewanella</taxon>
    </lineage>
</organism>
<accession>A9KZ79</accession>
<dbReference type="EC" id="2.4.2.4" evidence="1"/>
<dbReference type="EMBL" id="CP000891">
    <property type="protein sequence ID" value="ABX50527.1"/>
    <property type="molecule type" value="Genomic_DNA"/>
</dbReference>
<dbReference type="RefSeq" id="WP_006086930.1">
    <property type="nucleotide sequence ID" value="NC_009997.1"/>
</dbReference>
<dbReference type="SMR" id="A9KZ79"/>
<dbReference type="GeneID" id="11773410"/>
<dbReference type="KEGG" id="sbn:Sbal195_3365"/>
<dbReference type="HOGENOM" id="CLU_025040_0_1_6"/>
<dbReference type="UniPathway" id="UPA00578">
    <property type="reaction ID" value="UER00638"/>
</dbReference>
<dbReference type="Proteomes" id="UP000000770">
    <property type="component" value="Chromosome"/>
</dbReference>
<dbReference type="GO" id="GO:0005829">
    <property type="term" value="C:cytosol"/>
    <property type="evidence" value="ECO:0007669"/>
    <property type="project" value="TreeGrafter"/>
</dbReference>
<dbReference type="GO" id="GO:0004645">
    <property type="term" value="F:1,4-alpha-oligoglucan phosphorylase activity"/>
    <property type="evidence" value="ECO:0007669"/>
    <property type="project" value="InterPro"/>
</dbReference>
<dbReference type="GO" id="GO:0009032">
    <property type="term" value="F:thymidine phosphorylase activity"/>
    <property type="evidence" value="ECO:0007669"/>
    <property type="project" value="UniProtKB-UniRule"/>
</dbReference>
<dbReference type="GO" id="GO:0006206">
    <property type="term" value="P:pyrimidine nucleobase metabolic process"/>
    <property type="evidence" value="ECO:0007669"/>
    <property type="project" value="InterPro"/>
</dbReference>
<dbReference type="GO" id="GO:0046104">
    <property type="term" value="P:thymidine metabolic process"/>
    <property type="evidence" value="ECO:0007669"/>
    <property type="project" value="UniProtKB-UniRule"/>
</dbReference>
<dbReference type="FunFam" id="3.40.1030.10:FF:000001">
    <property type="entry name" value="Thymidine phosphorylase"/>
    <property type="match status" value="1"/>
</dbReference>
<dbReference type="FunFam" id="3.90.1170.30:FF:000001">
    <property type="entry name" value="Thymidine phosphorylase"/>
    <property type="match status" value="1"/>
</dbReference>
<dbReference type="Gene3D" id="3.40.1030.10">
    <property type="entry name" value="Nucleoside phosphorylase/phosphoribosyltransferase catalytic domain"/>
    <property type="match status" value="1"/>
</dbReference>
<dbReference type="Gene3D" id="3.90.1170.30">
    <property type="entry name" value="Pyrimidine nucleoside phosphorylase-like, C-terminal domain"/>
    <property type="match status" value="1"/>
</dbReference>
<dbReference type="Gene3D" id="1.20.970.10">
    <property type="entry name" value="Transferase, Pyrimidine Nucleoside Phosphorylase, Chain C"/>
    <property type="match status" value="1"/>
</dbReference>
<dbReference type="HAMAP" id="MF_01628">
    <property type="entry name" value="Thymid_phosp"/>
    <property type="match status" value="1"/>
</dbReference>
<dbReference type="InterPro" id="IPR000312">
    <property type="entry name" value="Glycosyl_Trfase_fam3"/>
</dbReference>
<dbReference type="InterPro" id="IPR017459">
    <property type="entry name" value="Glycosyl_Trfase_fam3_N_dom"/>
</dbReference>
<dbReference type="InterPro" id="IPR036320">
    <property type="entry name" value="Glycosyl_Trfase_fam3_N_dom_sf"/>
</dbReference>
<dbReference type="InterPro" id="IPR035902">
    <property type="entry name" value="Nuc_phospho_transferase"/>
</dbReference>
<dbReference type="InterPro" id="IPR036566">
    <property type="entry name" value="PYNP-like_C_sf"/>
</dbReference>
<dbReference type="InterPro" id="IPR013102">
    <property type="entry name" value="PYNP_C"/>
</dbReference>
<dbReference type="InterPro" id="IPR018090">
    <property type="entry name" value="Pyrmidine_PPas_bac/euk"/>
</dbReference>
<dbReference type="InterPro" id="IPR017872">
    <property type="entry name" value="Pyrmidine_PPase_CS"/>
</dbReference>
<dbReference type="InterPro" id="IPR000053">
    <property type="entry name" value="Thymidine/pyrmidine_PPase"/>
</dbReference>
<dbReference type="InterPro" id="IPR013465">
    <property type="entry name" value="Thymidine_Pase"/>
</dbReference>
<dbReference type="NCBIfam" id="NF004490">
    <property type="entry name" value="PRK05820.1"/>
    <property type="match status" value="1"/>
</dbReference>
<dbReference type="NCBIfam" id="TIGR02643">
    <property type="entry name" value="T_phosphoryl"/>
    <property type="match status" value="1"/>
</dbReference>
<dbReference type="NCBIfam" id="TIGR02644">
    <property type="entry name" value="Y_phosphoryl"/>
    <property type="match status" value="1"/>
</dbReference>
<dbReference type="PANTHER" id="PTHR10515">
    <property type="entry name" value="THYMIDINE PHOSPHORYLASE"/>
    <property type="match status" value="1"/>
</dbReference>
<dbReference type="PANTHER" id="PTHR10515:SF0">
    <property type="entry name" value="THYMIDINE PHOSPHORYLASE"/>
    <property type="match status" value="1"/>
</dbReference>
<dbReference type="Pfam" id="PF02885">
    <property type="entry name" value="Glycos_trans_3N"/>
    <property type="match status" value="1"/>
</dbReference>
<dbReference type="Pfam" id="PF00591">
    <property type="entry name" value="Glycos_transf_3"/>
    <property type="match status" value="1"/>
</dbReference>
<dbReference type="Pfam" id="PF07831">
    <property type="entry name" value="PYNP_C"/>
    <property type="match status" value="1"/>
</dbReference>
<dbReference type="PIRSF" id="PIRSF000478">
    <property type="entry name" value="TP_PyNP"/>
    <property type="match status" value="1"/>
</dbReference>
<dbReference type="SMART" id="SM00941">
    <property type="entry name" value="PYNP_C"/>
    <property type="match status" value="1"/>
</dbReference>
<dbReference type="SUPFAM" id="SSF52418">
    <property type="entry name" value="Nucleoside phosphorylase/phosphoribosyltransferase catalytic domain"/>
    <property type="match status" value="1"/>
</dbReference>
<dbReference type="SUPFAM" id="SSF47648">
    <property type="entry name" value="Nucleoside phosphorylase/phosphoribosyltransferase N-terminal domain"/>
    <property type="match status" value="1"/>
</dbReference>
<dbReference type="SUPFAM" id="SSF54680">
    <property type="entry name" value="Pyrimidine nucleoside phosphorylase C-terminal domain"/>
    <property type="match status" value="1"/>
</dbReference>
<dbReference type="PROSITE" id="PS00647">
    <property type="entry name" value="THYMID_PHOSPHORYLASE"/>
    <property type="match status" value="1"/>
</dbReference>
<evidence type="ECO:0000255" key="1">
    <source>
        <dbReference type="HAMAP-Rule" id="MF_01628"/>
    </source>
</evidence>
<reference key="1">
    <citation type="submission" date="2007-11" db="EMBL/GenBank/DDBJ databases">
        <title>Complete sequence of chromosome of Shewanella baltica OS195.</title>
        <authorList>
            <consortium name="US DOE Joint Genome Institute"/>
            <person name="Copeland A."/>
            <person name="Lucas S."/>
            <person name="Lapidus A."/>
            <person name="Barry K."/>
            <person name="Glavina del Rio T."/>
            <person name="Dalin E."/>
            <person name="Tice H."/>
            <person name="Pitluck S."/>
            <person name="Chain P."/>
            <person name="Malfatti S."/>
            <person name="Shin M."/>
            <person name="Vergez L."/>
            <person name="Schmutz J."/>
            <person name="Larimer F."/>
            <person name="Land M."/>
            <person name="Hauser L."/>
            <person name="Kyrpides N."/>
            <person name="Kim E."/>
            <person name="Brettar I."/>
            <person name="Rodrigues J."/>
            <person name="Konstantinidis K."/>
            <person name="Klappenbach J."/>
            <person name="Hofle M."/>
            <person name="Tiedje J."/>
            <person name="Richardson P."/>
        </authorList>
    </citation>
    <scope>NUCLEOTIDE SEQUENCE [LARGE SCALE GENOMIC DNA]</scope>
    <source>
        <strain>OS195</strain>
    </source>
</reference>
<keyword id="KW-0328">Glycosyltransferase</keyword>
<keyword id="KW-0808">Transferase</keyword>
<name>TYPH_SHEB9</name>
<sequence length="443" mass="46951">MFLAQEIIRKKRNGLALSSEEIQFFVQGITTNSVSEGQIAALGMAVYFNDMNMDERIALTTAMRDSGTVLNWQSLGLNGPVIDKHSTGGVGDVISLMLGPMAAACGGYVPMISGRGLGHTGGTLDKFDAIQGYQTEPSSELFRKVVKEVGVAIIGQTGDLVPADKRFYSIRDNTATVESISLITASILSKKLACNLDALAMDVKVGSGAFMPTYEASEELARSIAAVANGAGTKTTALLTDMNQVLASCAGNAVEVKEAIDFLTGAYRNPRLYEVTMGLCAEMLLLGGLASNEADARAKLNRVLDNGRAAELFGKMVSGLGGPVDFVENYSKYLPQSQIIRPVFADMQGYAYSMDTRELGLAVVTLGGGRRKPGDTLDYSVGLTQVCALGDKVDSSTPIAVIHAQSEAAFAEAELAVKKAIHIGETAPEKTPEIYAYIRASDL</sequence>
<protein>
    <recommendedName>
        <fullName evidence="1">Thymidine phosphorylase</fullName>
        <ecNumber evidence="1">2.4.2.4</ecNumber>
    </recommendedName>
    <alternativeName>
        <fullName evidence="1">TdRPase</fullName>
    </alternativeName>
</protein>
<comment type="function">
    <text evidence="1">The enzymes which catalyze the reversible phosphorolysis of pyrimidine nucleosides are involved in the degradation of these compounds and in their utilization as carbon and energy sources, or in the rescue of pyrimidine bases for nucleotide synthesis.</text>
</comment>
<comment type="catalytic activity">
    <reaction evidence="1">
        <text>thymidine + phosphate = 2-deoxy-alpha-D-ribose 1-phosphate + thymine</text>
        <dbReference type="Rhea" id="RHEA:16037"/>
        <dbReference type="ChEBI" id="CHEBI:17748"/>
        <dbReference type="ChEBI" id="CHEBI:17821"/>
        <dbReference type="ChEBI" id="CHEBI:43474"/>
        <dbReference type="ChEBI" id="CHEBI:57259"/>
        <dbReference type="EC" id="2.4.2.4"/>
    </reaction>
</comment>
<comment type="pathway">
    <text evidence="1">Pyrimidine metabolism; dTMP biosynthesis via salvage pathway; dTMP from thymine: step 1/2.</text>
</comment>
<comment type="subunit">
    <text evidence="1">Homodimer.</text>
</comment>
<comment type="similarity">
    <text evidence="1">Belongs to the thymidine/pyrimidine-nucleoside phosphorylase family.</text>
</comment>
<proteinExistence type="inferred from homology"/>
<feature type="chain" id="PRO_1000088109" description="Thymidine phosphorylase">
    <location>
        <begin position="1"/>
        <end position="443"/>
    </location>
</feature>
<gene>
    <name evidence="1" type="primary">deoA</name>
    <name type="ordered locus">Sbal195_3365</name>
</gene>